<name>URE2_PSEPK</name>
<evidence type="ECO:0000255" key="1">
    <source>
        <dbReference type="HAMAP-Rule" id="MF_01954"/>
    </source>
</evidence>
<accession>Q88J05</accession>
<feature type="chain" id="PRO_0000234263" description="Urease subunit beta">
    <location>
        <begin position="1"/>
        <end position="105"/>
    </location>
</feature>
<gene>
    <name evidence="1" type="primary">ureB</name>
    <name type="ordered locus">PP_2844</name>
</gene>
<sequence length="105" mass="11302">MIPGEIQVAAGDIELNSGRETVSVSVANHGDRPVQVGSHYHFYEVNDALVFDRAPTLGFRLDIPAGTAVRFEPGQARTVQLVAYAGKREVYGFQGKVMGALEGRA</sequence>
<comment type="catalytic activity">
    <reaction evidence="1">
        <text>urea + 2 H2O + H(+) = hydrogencarbonate + 2 NH4(+)</text>
        <dbReference type="Rhea" id="RHEA:20557"/>
        <dbReference type="ChEBI" id="CHEBI:15377"/>
        <dbReference type="ChEBI" id="CHEBI:15378"/>
        <dbReference type="ChEBI" id="CHEBI:16199"/>
        <dbReference type="ChEBI" id="CHEBI:17544"/>
        <dbReference type="ChEBI" id="CHEBI:28938"/>
        <dbReference type="EC" id="3.5.1.5"/>
    </reaction>
</comment>
<comment type="pathway">
    <text evidence="1">Nitrogen metabolism; urea degradation; CO(2) and NH(3) from urea (urease route): step 1/1.</text>
</comment>
<comment type="subunit">
    <text evidence="1">Heterotrimer of UreA (gamma), UreB (beta) and UreC (alpha) subunits. Three heterotrimers associate to form the active enzyme.</text>
</comment>
<comment type="subcellular location">
    <subcellularLocation>
        <location evidence="1">Cytoplasm</location>
    </subcellularLocation>
</comment>
<comment type="similarity">
    <text evidence="1">Belongs to the urease beta subunit family.</text>
</comment>
<protein>
    <recommendedName>
        <fullName evidence="1">Urease subunit beta</fullName>
        <ecNumber evidence="1">3.5.1.5</ecNumber>
    </recommendedName>
    <alternativeName>
        <fullName evidence="1">Urea amidohydrolase subunit beta</fullName>
    </alternativeName>
</protein>
<reference key="1">
    <citation type="journal article" date="2002" name="Environ. Microbiol.">
        <title>Complete genome sequence and comparative analysis of the metabolically versatile Pseudomonas putida KT2440.</title>
        <authorList>
            <person name="Nelson K.E."/>
            <person name="Weinel C."/>
            <person name="Paulsen I.T."/>
            <person name="Dodson R.J."/>
            <person name="Hilbert H."/>
            <person name="Martins dos Santos V.A.P."/>
            <person name="Fouts D.E."/>
            <person name="Gill S.R."/>
            <person name="Pop M."/>
            <person name="Holmes M."/>
            <person name="Brinkac L.M."/>
            <person name="Beanan M.J."/>
            <person name="DeBoy R.T."/>
            <person name="Daugherty S.C."/>
            <person name="Kolonay J.F."/>
            <person name="Madupu R."/>
            <person name="Nelson W.C."/>
            <person name="White O."/>
            <person name="Peterson J.D."/>
            <person name="Khouri H.M."/>
            <person name="Hance I."/>
            <person name="Chris Lee P."/>
            <person name="Holtzapple E.K."/>
            <person name="Scanlan D."/>
            <person name="Tran K."/>
            <person name="Moazzez A."/>
            <person name="Utterback T.R."/>
            <person name="Rizzo M."/>
            <person name="Lee K."/>
            <person name="Kosack D."/>
            <person name="Moestl D."/>
            <person name="Wedler H."/>
            <person name="Lauber J."/>
            <person name="Stjepandic D."/>
            <person name="Hoheisel J."/>
            <person name="Straetz M."/>
            <person name="Heim S."/>
            <person name="Kiewitz C."/>
            <person name="Eisen J.A."/>
            <person name="Timmis K.N."/>
            <person name="Duesterhoeft A."/>
            <person name="Tuemmler B."/>
            <person name="Fraser C.M."/>
        </authorList>
    </citation>
    <scope>NUCLEOTIDE SEQUENCE [LARGE SCALE GENOMIC DNA]</scope>
    <source>
        <strain>ATCC 47054 / DSM 6125 / CFBP 8728 / NCIMB 11950 / KT2440</strain>
    </source>
</reference>
<keyword id="KW-0963">Cytoplasm</keyword>
<keyword id="KW-0378">Hydrolase</keyword>
<keyword id="KW-1185">Reference proteome</keyword>
<dbReference type="EC" id="3.5.1.5" evidence="1"/>
<dbReference type="EMBL" id="AE015451">
    <property type="protein sequence ID" value="AAN68452.1"/>
    <property type="molecule type" value="Genomic_DNA"/>
</dbReference>
<dbReference type="RefSeq" id="NP_744988.1">
    <property type="nucleotide sequence ID" value="NC_002947.4"/>
</dbReference>
<dbReference type="RefSeq" id="WP_010953752.1">
    <property type="nucleotide sequence ID" value="NZ_CP169744.1"/>
</dbReference>
<dbReference type="SMR" id="Q88J05"/>
<dbReference type="STRING" id="160488.PP_2844"/>
<dbReference type="PaxDb" id="160488-PP_2844"/>
<dbReference type="KEGG" id="ppu:PP_2844"/>
<dbReference type="PATRIC" id="fig|160488.4.peg.3017"/>
<dbReference type="eggNOG" id="COG0832">
    <property type="taxonomic scope" value="Bacteria"/>
</dbReference>
<dbReference type="HOGENOM" id="CLU_129707_1_1_6"/>
<dbReference type="OrthoDB" id="9797217at2"/>
<dbReference type="PhylomeDB" id="Q88J05"/>
<dbReference type="BioCyc" id="PPUT160488:G1G01-3024-MONOMER"/>
<dbReference type="UniPathway" id="UPA00258">
    <property type="reaction ID" value="UER00370"/>
</dbReference>
<dbReference type="Proteomes" id="UP000000556">
    <property type="component" value="Chromosome"/>
</dbReference>
<dbReference type="GO" id="GO:0035550">
    <property type="term" value="C:urease complex"/>
    <property type="evidence" value="ECO:0007669"/>
    <property type="project" value="InterPro"/>
</dbReference>
<dbReference type="GO" id="GO:0009039">
    <property type="term" value="F:urease activity"/>
    <property type="evidence" value="ECO:0007669"/>
    <property type="project" value="UniProtKB-UniRule"/>
</dbReference>
<dbReference type="GO" id="GO:0043419">
    <property type="term" value="P:urea catabolic process"/>
    <property type="evidence" value="ECO:0007669"/>
    <property type="project" value="UniProtKB-UniRule"/>
</dbReference>
<dbReference type="CDD" id="cd00407">
    <property type="entry name" value="Urease_beta"/>
    <property type="match status" value="1"/>
</dbReference>
<dbReference type="FunFam" id="2.10.150.10:FF:000001">
    <property type="entry name" value="Urease subunit beta"/>
    <property type="match status" value="1"/>
</dbReference>
<dbReference type="Gene3D" id="2.10.150.10">
    <property type="entry name" value="Urease, beta subunit"/>
    <property type="match status" value="1"/>
</dbReference>
<dbReference type="HAMAP" id="MF_01954">
    <property type="entry name" value="Urease_beta"/>
    <property type="match status" value="1"/>
</dbReference>
<dbReference type="InterPro" id="IPR002019">
    <property type="entry name" value="Urease_beta-like"/>
</dbReference>
<dbReference type="InterPro" id="IPR036461">
    <property type="entry name" value="Urease_betasu_sf"/>
</dbReference>
<dbReference type="InterPro" id="IPR050069">
    <property type="entry name" value="Urease_subunit"/>
</dbReference>
<dbReference type="NCBIfam" id="NF009682">
    <property type="entry name" value="PRK13203.1"/>
    <property type="match status" value="1"/>
</dbReference>
<dbReference type="NCBIfam" id="TIGR00192">
    <property type="entry name" value="urease_beta"/>
    <property type="match status" value="1"/>
</dbReference>
<dbReference type="PANTHER" id="PTHR33569">
    <property type="entry name" value="UREASE"/>
    <property type="match status" value="1"/>
</dbReference>
<dbReference type="PANTHER" id="PTHR33569:SF1">
    <property type="entry name" value="UREASE"/>
    <property type="match status" value="1"/>
</dbReference>
<dbReference type="Pfam" id="PF00699">
    <property type="entry name" value="Urease_beta"/>
    <property type="match status" value="1"/>
</dbReference>
<dbReference type="SUPFAM" id="SSF51278">
    <property type="entry name" value="Urease, beta-subunit"/>
    <property type="match status" value="1"/>
</dbReference>
<organism>
    <name type="scientific">Pseudomonas putida (strain ATCC 47054 / DSM 6125 / CFBP 8728 / NCIMB 11950 / KT2440)</name>
    <dbReference type="NCBI Taxonomy" id="160488"/>
    <lineage>
        <taxon>Bacteria</taxon>
        <taxon>Pseudomonadati</taxon>
        <taxon>Pseudomonadota</taxon>
        <taxon>Gammaproteobacteria</taxon>
        <taxon>Pseudomonadales</taxon>
        <taxon>Pseudomonadaceae</taxon>
        <taxon>Pseudomonas</taxon>
    </lineage>
</organism>
<proteinExistence type="inferred from homology"/>